<proteinExistence type="inferred from homology"/>
<feature type="chain" id="PRO_1000133168" description="Chaperone protein DnaK">
    <location>
        <begin position="1"/>
        <end position="596"/>
    </location>
</feature>
<feature type="modified residue" description="Phosphothreonine; by autocatalysis" evidence="1">
    <location>
        <position position="180"/>
    </location>
</feature>
<organism>
    <name type="scientific">Thermotoga neapolitana (strain ATCC 49049 / DSM 4359 / NBRC 107923 / NS-E)</name>
    <dbReference type="NCBI Taxonomy" id="309803"/>
    <lineage>
        <taxon>Bacteria</taxon>
        <taxon>Thermotogati</taxon>
        <taxon>Thermotogota</taxon>
        <taxon>Thermotogae</taxon>
        <taxon>Thermotogales</taxon>
        <taxon>Thermotogaceae</taxon>
        <taxon>Thermotoga</taxon>
    </lineage>
</organism>
<gene>
    <name evidence="1" type="primary">dnaK</name>
    <name type="ordered locus">CTN_0304</name>
</gene>
<dbReference type="EMBL" id="CP000916">
    <property type="protein sequence ID" value="ACM22480.1"/>
    <property type="molecule type" value="Genomic_DNA"/>
</dbReference>
<dbReference type="RefSeq" id="WP_015918809.1">
    <property type="nucleotide sequence ID" value="NC_011978.1"/>
</dbReference>
<dbReference type="SMR" id="B9KBT4"/>
<dbReference type="STRING" id="309803.CTN_0304"/>
<dbReference type="KEGG" id="tna:CTN_0304"/>
<dbReference type="eggNOG" id="COG0443">
    <property type="taxonomic scope" value="Bacteria"/>
</dbReference>
<dbReference type="HOGENOM" id="CLU_005965_2_4_0"/>
<dbReference type="Proteomes" id="UP000000445">
    <property type="component" value="Chromosome"/>
</dbReference>
<dbReference type="GO" id="GO:0005524">
    <property type="term" value="F:ATP binding"/>
    <property type="evidence" value="ECO:0007669"/>
    <property type="project" value="UniProtKB-UniRule"/>
</dbReference>
<dbReference type="GO" id="GO:0140662">
    <property type="term" value="F:ATP-dependent protein folding chaperone"/>
    <property type="evidence" value="ECO:0007669"/>
    <property type="project" value="InterPro"/>
</dbReference>
<dbReference type="GO" id="GO:0051082">
    <property type="term" value="F:unfolded protein binding"/>
    <property type="evidence" value="ECO:0007669"/>
    <property type="project" value="InterPro"/>
</dbReference>
<dbReference type="CDD" id="cd10234">
    <property type="entry name" value="ASKHA_NBD_HSP70_DnaK-like"/>
    <property type="match status" value="1"/>
</dbReference>
<dbReference type="FunFam" id="3.30.30.30:FF:000014">
    <property type="entry name" value="Chaperone protein DnaK"/>
    <property type="match status" value="1"/>
</dbReference>
<dbReference type="FunFam" id="2.60.34.10:FF:000014">
    <property type="entry name" value="Chaperone protein DnaK HSP70"/>
    <property type="match status" value="1"/>
</dbReference>
<dbReference type="FunFam" id="1.20.1270.10:FF:000001">
    <property type="entry name" value="Molecular chaperone DnaK"/>
    <property type="match status" value="1"/>
</dbReference>
<dbReference type="FunFam" id="3.30.420.40:FF:000071">
    <property type="entry name" value="Molecular chaperone DnaK"/>
    <property type="match status" value="1"/>
</dbReference>
<dbReference type="FunFam" id="3.90.640.10:FF:000003">
    <property type="entry name" value="Molecular chaperone DnaK"/>
    <property type="match status" value="1"/>
</dbReference>
<dbReference type="Gene3D" id="1.20.1270.10">
    <property type="match status" value="1"/>
</dbReference>
<dbReference type="Gene3D" id="3.30.30.30">
    <property type="match status" value="1"/>
</dbReference>
<dbReference type="Gene3D" id="3.30.420.40">
    <property type="match status" value="3"/>
</dbReference>
<dbReference type="Gene3D" id="3.90.640.10">
    <property type="entry name" value="Actin, Chain A, domain 4"/>
    <property type="match status" value="1"/>
</dbReference>
<dbReference type="Gene3D" id="2.60.34.10">
    <property type="entry name" value="Substrate Binding Domain Of DNAk, Chain A, domain 1"/>
    <property type="match status" value="1"/>
</dbReference>
<dbReference type="HAMAP" id="MF_00332">
    <property type="entry name" value="DnaK"/>
    <property type="match status" value="1"/>
</dbReference>
<dbReference type="InterPro" id="IPR043129">
    <property type="entry name" value="ATPase_NBD"/>
</dbReference>
<dbReference type="InterPro" id="IPR012725">
    <property type="entry name" value="Chaperone_DnaK"/>
</dbReference>
<dbReference type="InterPro" id="IPR018181">
    <property type="entry name" value="Heat_shock_70_CS"/>
</dbReference>
<dbReference type="InterPro" id="IPR029048">
    <property type="entry name" value="HSP70_C_sf"/>
</dbReference>
<dbReference type="InterPro" id="IPR029047">
    <property type="entry name" value="HSP70_peptide-bd_sf"/>
</dbReference>
<dbReference type="InterPro" id="IPR013126">
    <property type="entry name" value="Hsp_70_fam"/>
</dbReference>
<dbReference type="NCBIfam" id="NF001413">
    <property type="entry name" value="PRK00290.1"/>
    <property type="match status" value="1"/>
</dbReference>
<dbReference type="NCBIfam" id="TIGR02350">
    <property type="entry name" value="prok_dnaK"/>
    <property type="match status" value="1"/>
</dbReference>
<dbReference type="PANTHER" id="PTHR19375">
    <property type="entry name" value="HEAT SHOCK PROTEIN 70KDA"/>
    <property type="match status" value="1"/>
</dbReference>
<dbReference type="Pfam" id="PF00012">
    <property type="entry name" value="HSP70"/>
    <property type="match status" value="1"/>
</dbReference>
<dbReference type="PRINTS" id="PR00301">
    <property type="entry name" value="HEATSHOCK70"/>
</dbReference>
<dbReference type="SUPFAM" id="SSF53067">
    <property type="entry name" value="Actin-like ATPase domain"/>
    <property type="match status" value="2"/>
</dbReference>
<dbReference type="SUPFAM" id="SSF100920">
    <property type="entry name" value="Heat shock protein 70kD (HSP70), peptide-binding domain"/>
    <property type="match status" value="1"/>
</dbReference>
<dbReference type="PROSITE" id="PS00297">
    <property type="entry name" value="HSP70_1"/>
    <property type="match status" value="1"/>
</dbReference>
<dbReference type="PROSITE" id="PS00329">
    <property type="entry name" value="HSP70_2"/>
    <property type="match status" value="1"/>
</dbReference>
<dbReference type="PROSITE" id="PS01036">
    <property type="entry name" value="HSP70_3"/>
    <property type="match status" value="1"/>
</dbReference>
<sequence length="596" mass="66048">MAEKKEFVVGIDLGTTNSVIAWMKPDGTVEVIPNAEGSRITPSVVAFTKSGEILVGEPAKRQMILNPERTIKSIKRKMGTDYKVRIDDKEYTPQEISAFILKKLKKDAEAYLGGEIKKAVITCPAYFNDAQRQATKEAGIIAGLEVLRIINEPTAAALAYGLDKAGKEQKVLVYDLGGGTFDVSILEIGDGVIEVIATAGNNHLGGDDFDQRLIDWMAEEFKKQHGIDLREDRQALQRLRDAAEKAKIELSTKMETDVSLPFIAVSPSGQPLHLEMRITRSLFESLTRDLVEMTRGPIEQALNDAKLSPQDIDEIILVGGMTRVPMVQRFIKEFFGKEPNKSVNPDEAVAIGAAIQAAILAGTEGAKGRDIVLVDVTPLTLGIEVKGGLFEPIIPRNTKIPVRKSKIFTTVEDGQTEVEIRVYQGERPIARENIFLGSFKLVGIPPAPRGVPQIEVTFDIDSDGIVHVSAKDLGSGKEQSMVVTGRHKLSEEDIKRMIEDAKRYEEQDKRLKEEIELKNRADDLAYSVEKTLREHGDKIPADLKSKLENMIKELRDAINRNDIPRVKMLFDDLQKESMKIGEYLYKSATGGEATNQ</sequence>
<protein>
    <recommendedName>
        <fullName evidence="1">Chaperone protein DnaK</fullName>
    </recommendedName>
    <alternativeName>
        <fullName evidence="1">HSP70</fullName>
    </alternativeName>
    <alternativeName>
        <fullName evidence="1">Heat shock 70 kDa protein</fullName>
    </alternativeName>
    <alternativeName>
        <fullName evidence="1">Heat shock protein 70</fullName>
    </alternativeName>
</protein>
<comment type="function">
    <text evidence="1">Acts as a chaperone.</text>
</comment>
<comment type="induction">
    <text evidence="1">By stress conditions e.g. heat shock.</text>
</comment>
<comment type="similarity">
    <text evidence="1">Belongs to the heat shock protein 70 family.</text>
</comment>
<name>DNAK_THENN</name>
<accession>B9KBT4</accession>
<keyword id="KW-0067">ATP-binding</keyword>
<keyword id="KW-0143">Chaperone</keyword>
<keyword id="KW-0547">Nucleotide-binding</keyword>
<keyword id="KW-0597">Phosphoprotein</keyword>
<keyword id="KW-0346">Stress response</keyword>
<reference key="1">
    <citation type="submission" date="2007-11" db="EMBL/GenBank/DDBJ databases">
        <title>The genome sequence of the hyperthermophilic bacterium Thermotoga neapolitana.</title>
        <authorList>
            <person name="Lim S.K."/>
            <person name="Kim J.S."/>
            <person name="Cha S.H."/>
            <person name="Park B.C."/>
            <person name="Lee D.S."/>
            <person name="Tae H.S."/>
            <person name="Kim S.-J."/>
            <person name="Kim J.J."/>
            <person name="Park K.J."/>
            <person name="Lee S.Y."/>
        </authorList>
    </citation>
    <scope>NUCLEOTIDE SEQUENCE [LARGE SCALE GENOMIC DNA]</scope>
    <source>
        <strain>ATCC 49049 / DSM 4359 / NBRC 107923 / NS-E</strain>
    </source>
</reference>
<evidence type="ECO:0000255" key="1">
    <source>
        <dbReference type="HAMAP-Rule" id="MF_00332"/>
    </source>
</evidence>